<gene>
    <name type="ordered locus">ABC1477</name>
</gene>
<keyword id="KW-1185">Reference proteome</keyword>
<dbReference type="EMBL" id="AP006627">
    <property type="protein sequence ID" value="BAD64012.1"/>
    <property type="molecule type" value="Genomic_DNA"/>
</dbReference>
<dbReference type="STRING" id="66692.ABC1477"/>
<dbReference type="KEGG" id="bcl:ABC1477"/>
<dbReference type="eggNOG" id="COG2718">
    <property type="taxonomic scope" value="Bacteria"/>
</dbReference>
<dbReference type="HOGENOM" id="CLU_049702_2_0_9"/>
<dbReference type="OrthoDB" id="9788289at2"/>
<dbReference type="Proteomes" id="UP000001168">
    <property type="component" value="Chromosome"/>
</dbReference>
<dbReference type="HAMAP" id="MF_01232">
    <property type="entry name" value="UPF0229"/>
    <property type="match status" value="1"/>
</dbReference>
<dbReference type="InterPro" id="IPR014230">
    <property type="entry name" value="Spore_YhbH"/>
</dbReference>
<dbReference type="InterPro" id="IPR006698">
    <property type="entry name" value="UPF0229"/>
</dbReference>
<dbReference type="InterPro" id="IPR036465">
    <property type="entry name" value="vWFA_dom_sf"/>
</dbReference>
<dbReference type="NCBIfam" id="TIGR02877">
    <property type="entry name" value="spore_yhbH"/>
    <property type="match status" value="1"/>
</dbReference>
<dbReference type="PANTHER" id="PTHR30510">
    <property type="entry name" value="UPF0229 PROTEIN YEAH"/>
    <property type="match status" value="1"/>
</dbReference>
<dbReference type="PANTHER" id="PTHR30510:SF2">
    <property type="entry name" value="UPF0229 PROTEIN YEAH"/>
    <property type="match status" value="1"/>
</dbReference>
<dbReference type="Pfam" id="PF04285">
    <property type="entry name" value="DUF444"/>
    <property type="match status" value="1"/>
</dbReference>
<dbReference type="SUPFAM" id="SSF53300">
    <property type="entry name" value="vWA-like"/>
    <property type="match status" value="1"/>
</dbReference>
<organism>
    <name type="scientific">Shouchella clausii (strain KSM-K16)</name>
    <name type="common">Alkalihalobacillus clausii</name>
    <dbReference type="NCBI Taxonomy" id="66692"/>
    <lineage>
        <taxon>Bacteria</taxon>
        <taxon>Bacillati</taxon>
        <taxon>Bacillota</taxon>
        <taxon>Bacilli</taxon>
        <taxon>Bacillales</taxon>
        <taxon>Bacillaceae</taxon>
        <taxon>Shouchella</taxon>
    </lineage>
</organism>
<proteinExistence type="inferred from homology"/>
<comment type="similarity">
    <text evidence="1">Belongs to the UPF0229 family.</text>
</comment>
<name>Y1477_SHOC1</name>
<sequence length="390" mass="44820">MEKDNGRQFTISQENWSLHRKGFQDQRRHQEKVRDAIKKNLPDLVSEENIVMSNGKDVIKIPIRSLDEYKIRYNYDKNQHVGQGKGDSKIGDIVARDPNGDKQAGAGKGSGAGDQAGEDYNEAEVSIVELEEMLFSELALPNLQKKEEQELVVEDIAFNDIRKKGLMGNVDKRRTILAAIKRNALNGKANIMPIYNDDLRFKTWTETIRPESKAVVIAMMDTSGSMGRFEKYMARSFFFWMTRFLRTKYETVEIEFIAHHTEAKVVSEEDFFSKGESGGTICSSAYRKALELIDEKYNPRAYNIYPFHFSDGDNLTSDNARCLKLVNQLMDRSNLFGYGEVNQYSRHSTLMSAYKNITDPRFMHYILKEKGDVYHALKFFFQKSAEEAPV</sequence>
<accession>Q5WHZ3</accession>
<feature type="chain" id="PRO_1000066850" description="UPF0229 protein ABC1477">
    <location>
        <begin position="1"/>
        <end position="390"/>
    </location>
</feature>
<feature type="region of interest" description="Disordered" evidence="2">
    <location>
        <begin position="1"/>
        <end position="31"/>
    </location>
</feature>
<feature type="region of interest" description="Disordered" evidence="2">
    <location>
        <begin position="81"/>
        <end position="118"/>
    </location>
</feature>
<feature type="compositionally biased region" description="Polar residues" evidence="2">
    <location>
        <begin position="7"/>
        <end position="16"/>
    </location>
</feature>
<feature type="compositionally biased region" description="Basic and acidic residues" evidence="2">
    <location>
        <begin position="22"/>
        <end position="31"/>
    </location>
</feature>
<feature type="compositionally biased region" description="Basic and acidic residues" evidence="2">
    <location>
        <begin position="86"/>
        <end position="100"/>
    </location>
</feature>
<protein>
    <recommendedName>
        <fullName evidence="1">UPF0229 protein ABC1477</fullName>
    </recommendedName>
</protein>
<reference key="1">
    <citation type="submission" date="2003-10" db="EMBL/GenBank/DDBJ databases">
        <title>The complete genome sequence of the alkaliphilic Bacillus clausii KSM-K16.</title>
        <authorList>
            <person name="Takaki Y."/>
            <person name="Kageyama Y."/>
            <person name="Shimamura S."/>
            <person name="Suzuki H."/>
            <person name="Nishi S."/>
            <person name="Hatada Y."/>
            <person name="Kawai S."/>
            <person name="Ito S."/>
            <person name="Horikoshi K."/>
        </authorList>
    </citation>
    <scope>NUCLEOTIDE SEQUENCE [LARGE SCALE GENOMIC DNA]</scope>
    <source>
        <strain>KSM-K16</strain>
    </source>
</reference>
<evidence type="ECO:0000255" key="1">
    <source>
        <dbReference type="HAMAP-Rule" id="MF_01232"/>
    </source>
</evidence>
<evidence type="ECO:0000256" key="2">
    <source>
        <dbReference type="SAM" id="MobiDB-lite"/>
    </source>
</evidence>